<protein>
    <recommendedName>
        <fullName>Syntaxin-12</fullName>
    </recommendedName>
</protein>
<keyword id="KW-0007">Acetylation</keyword>
<keyword id="KW-0175">Coiled coil</keyword>
<keyword id="KW-0967">Endosome</keyword>
<keyword id="KW-0333">Golgi apparatus</keyword>
<keyword id="KW-0472">Membrane</keyword>
<keyword id="KW-0597">Phosphoprotein</keyword>
<keyword id="KW-0653">Protein transport</keyword>
<keyword id="KW-1185">Reference proteome</keyword>
<keyword id="KW-0812">Transmembrane</keyword>
<keyword id="KW-1133">Transmembrane helix</keyword>
<keyword id="KW-0813">Transport</keyword>
<gene>
    <name type="primary">STX12</name>
</gene>
<feature type="initiator methionine" description="Removed" evidence="2">
    <location>
        <position position="1"/>
    </location>
</feature>
<feature type="chain" id="PRO_0000210225" description="Syntaxin-12">
    <location>
        <begin position="2"/>
        <end position="276"/>
    </location>
</feature>
<feature type="topological domain" description="Cytoplasmic" evidence="4">
    <location>
        <begin position="2"/>
        <end position="248"/>
    </location>
</feature>
<feature type="transmembrane region" description="Helical; Anchor for type IV membrane protein" evidence="4">
    <location>
        <begin position="249"/>
        <end position="269"/>
    </location>
</feature>
<feature type="topological domain" description="Vesicular" evidence="4">
    <location>
        <begin position="270"/>
        <end position="276"/>
    </location>
</feature>
<feature type="domain" description="t-SNARE coiled-coil homology" evidence="5">
    <location>
        <begin position="178"/>
        <end position="240"/>
    </location>
</feature>
<feature type="coiled-coil region" evidence="4">
    <location>
        <begin position="33"/>
        <end position="131"/>
    </location>
</feature>
<feature type="modified residue" description="N-acetylserine" evidence="2">
    <location>
        <position position="2"/>
    </location>
</feature>
<feature type="modified residue" description="Phosphoserine" evidence="3">
    <location>
        <position position="139"/>
    </location>
</feature>
<feature type="modified residue" description="Phosphoserine" evidence="2">
    <location>
        <position position="142"/>
    </location>
</feature>
<feature type="modified residue" description="Phosphoserine" evidence="3">
    <location>
        <position position="218"/>
    </location>
</feature>
<feature type="modified residue" description="Phosphoserine" evidence="3">
    <location>
        <position position="225"/>
    </location>
</feature>
<organism>
    <name type="scientific">Pongo abelii</name>
    <name type="common">Sumatran orangutan</name>
    <name type="synonym">Pongo pygmaeus abelii</name>
    <dbReference type="NCBI Taxonomy" id="9601"/>
    <lineage>
        <taxon>Eukaryota</taxon>
        <taxon>Metazoa</taxon>
        <taxon>Chordata</taxon>
        <taxon>Craniata</taxon>
        <taxon>Vertebrata</taxon>
        <taxon>Euteleostomi</taxon>
        <taxon>Mammalia</taxon>
        <taxon>Eutheria</taxon>
        <taxon>Euarchontoglires</taxon>
        <taxon>Primates</taxon>
        <taxon>Haplorrhini</taxon>
        <taxon>Catarrhini</taxon>
        <taxon>Hominidae</taxon>
        <taxon>Pongo</taxon>
    </lineage>
</organism>
<dbReference type="EMBL" id="CR858517">
    <property type="protein sequence ID" value="CAH90744.1"/>
    <property type="molecule type" value="mRNA"/>
</dbReference>
<dbReference type="RefSeq" id="NP_001125416.1">
    <property type="nucleotide sequence ID" value="NM_001131944.1"/>
</dbReference>
<dbReference type="SMR" id="Q5RBW6"/>
<dbReference type="STRING" id="9601.ENSPPYP00000001911"/>
<dbReference type="GeneID" id="100172323"/>
<dbReference type="KEGG" id="pon:100172323"/>
<dbReference type="CTD" id="23673"/>
<dbReference type="eggNOG" id="KOG0811">
    <property type="taxonomic scope" value="Eukaryota"/>
</dbReference>
<dbReference type="InParanoid" id="Q5RBW6"/>
<dbReference type="OrthoDB" id="364348at2759"/>
<dbReference type="Proteomes" id="UP000001595">
    <property type="component" value="Unplaced"/>
</dbReference>
<dbReference type="GO" id="GO:0031901">
    <property type="term" value="C:early endosome membrane"/>
    <property type="evidence" value="ECO:0007669"/>
    <property type="project" value="UniProtKB-SubCell"/>
</dbReference>
<dbReference type="GO" id="GO:0000139">
    <property type="term" value="C:Golgi membrane"/>
    <property type="evidence" value="ECO:0007669"/>
    <property type="project" value="UniProtKB-SubCell"/>
</dbReference>
<dbReference type="GO" id="GO:0098837">
    <property type="term" value="C:postsynaptic recycling endosome"/>
    <property type="evidence" value="ECO:0007669"/>
    <property type="project" value="TreeGrafter"/>
</dbReference>
<dbReference type="GO" id="GO:0055037">
    <property type="term" value="C:recycling endosome"/>
    <property type="evidence" value="ECO:0000250"/>
    <property type="project" value="UniProtKB"/>
</dbReference>
<dbReference type="GO" id="GO:0055038">
    <property type="term" value="C:recycling endosome membrane"/>
    <property type="evidence" value="ECO:0007669"/>
    <property type="project" value="UniProtKB-SubCell"/>
</dbReference>
<dbReference type="GO" id="GO:0031201">
    <property type="term" value="C:SNARE complex"/>
    <property type="evidence" value="ECO:0000250"/>
    <property type="project" value="UniProtKB"/>
</dbReference>
<dbReference type="GO" id="GO:0030672">
    <property type="term" value="C:synaptic vesicle membrane"/>
    <property type="evidence" value="ECO:0007669"/>
    <property type="project" value="TreeGrafter"/>
</dbReference>
<dbReference type="GO" id="GO:0005484">
    <property type="term" value="F:SNAP receptor activity"/>
    <property type="evidence" value="ECO:0007669"/>
    <property type="project" value="InterPro"/>
</dbReference>
<dbReference type="GO" id="GO:0000149">
    <property type="term" value="F:SNARE binding"/>
    <property type="evidence" value="ECO:0007669"/>
    <property type="project" value="TreeGrafter"/>
</dbReference>
<dbReference type="GO" id="GO:0000045">
    <property type="term" value="P:autophagosome assembly"/>
    <property type="evidence" value="ECO:0007669"/>
    <property type="project" value="TreeGrafter"/>
</dbReference>
<dbReference type="GO" id="GO:0032456">
    <property type="term" value="P:endocytic recycling"/>
    <property type="evidence" value="ECO:0000250"/>
    <property type="project" value="UniProtKB"/>
</dbReference>
<dbReference type="GO" id="GO:0006886">
    <property type="term" value="P:intracellular protein transport"/>
    <property type="evidence" value="ECO:0007669"/>
    <property type="project" value="InterPro"/>
</dbReference>
<dbReference type="GO" id="GO:0048278">
    <property type="term" value="P:vesicle docking"/>
    <property type="evidence" value="ECO:0007669"/>
    <property type="project" value="TreeGrafter"/>
</dbReference>
<dbReference type="GO" id="GO:0006906">
    <property type="term" value="P:vesicle fusion"/>
    <property type="evidence" value="ECO:0007669"/>
    <property type="project" value="TreeGrafter"/>
</dbReference>
<dbReference type="CDD" id="cd15876">
    <property type="entry name" value="SNARE_syntaxin12"/>
    <property type="match status" value="1"/>
</dbReference>
<dbReference type="CDD" id="cd00179">
    <property type="entry name" value="SynN"/>
    <property type="match status" value="1"/>
</dbReference>
<dbReference type="FunFam" id="1.20.5.110:FF:000016">
    <property type="entry name" value="Syntaxin 12"/>
    <property type="match status" value="1"/>
</dbReference>
<dbReference type="FunFam" id="1.20.58.70:FF:000009">
    <property type="entry name" value="Syntaxin 12"/>
    <property type="match status" value="1"/>
</dbReference>
<dbReference type="Gene3D" id="1.20.5.110">
    <property type="match status" value="1"/>
</dbReference>
<dbReference type="Gene3D" id="1.20.58.70">
    <property type="match status" value="1"/>
</dbReference>
<dbReference type="InterPro" id="IPR010989">
    <property type="entry name" value="SNARE"/>
</dbReference>
<dbReference type="InterPro" id="IPR045242">
    <property type="entry name" value="Syntaxin"/>
</dbReference>
<dbReference type="InterPro" id="IPR006012">
    <property type="entry name" value="Syntaxin/epimorphin_CS"/>
</dbReference>
<dbReference type="InterPro" id="IPR006011">
    <property type="entry name" value="Syntaxin_N"/>
</dbReference>
<dbReference type="InterPro" id="IPR000727">
    <property type="entry name" value="T_SNARE_dom"/>
</dbReference>
<dbReference type="PANTHER" id="PTHR19957">
    <property type="entry name" value="SYNTAXIN"/>
    <property type="match status" value="1"/>
</dbReference>
<dbReference type="PANTHER" id="PTHR19957:SF88">
    <property type="entry name" value="SYNTAXIN-12"/>
    <property type="match status" value="1"/>
</dbReference>
<dbReference type="Pfam" id="PF05739">
    <property type="entry name" value="SNARE"/>
    <property type="match status" value="1"/>
</dbReference>
<dbReference type="Pfam" id="PF14523">
    <property type="entry name" value="Syntaxin_2"/>
    <property type="match status" value="1"/>
</dbReference>
<dbReference type="SMART" id="SM00503">
    <property type="entry name" value="SynN"/>
    <property type="match status" value="1"/>
</dbReference>
<dbReference type="SMART" id="SM00397">
    <property type="entry name" value="t_SNARE"/>
    <property type="match status" value="1"/>
</dbReference>
<dbReference type="SUPFAM" id="SSF47661">
    <property type="entry name" value="t-snare proteins"/>
    <property type="match status" value="1"/>
</dbReference>
<dbReference type="PROSITE" id="PS00914">
    <property type="entry name" value="SYNTAXIN"/>
    <property type="match status" value="1"/>
</dbReference>
<dbReference type="PROSITE" id="PS50192">
    <property type="entry name" value="T_SNARE"/>
    <property type="match status" value="1"/>
</dbReference>
<name>STX12_PONAB</name>
<proteinExistence type="evidence at transcript level"/>
<sequence length="276" mass="31588">MSYGPLDMYRNPGPSGPQLRDFSSIIQTCSGNIQRISQATAQIKNSMSQLGTKQDSSKLQENLQQLQHSTNQLAKETNELLKELGSLPLPLSTSEQRQQRLQKERLMNDFSAALNNFQAVQRRVSEKEKESIARARAGSRLSAEERQREEQLVSFDSHEEWNQMQSQDDEVAITEQDLELIKERETAIRQLEADILDVNQIFKDLAMMIHDQGDLIDSIEANVESSEVHVERATEQLQRAAYYQKKSRKKMCILVLVLSVIIVILGLIIWLVYKTK</sequence>
<comment type="function">
    <text evidence="1">SNARE promoting fusion of transport vesicles with target membranes. Together with SNARE STX6, promotes movement of vesicles from endosomes to the cell membrane, and may therefore function in the endocytic recycling pathway. Through complex formation with GRIP1, GRIA2 and NSG1 controls the intracellular fate of AMPAR and the endosomal sorting of the GRIA2 subunit toward recycling and membrane targeting.</text>
</comment>
<comment type="subunit">
    <text evidence="1 2 3">Associates with the BLOC-1 complex. Interacts with BLOC1S6. Interacts with NAPA and SNAP23. Identified in a complex containing STX6, STX12, VAMP4 and VTI1A (By similarity). Interacts with GRIPAP1 (By similarity). Forms a complex with GRIP1, GRIA2 and NSG1; controls the intracellular fate of AMPAR and the endosomal sorting of the GRIA2 subunit toward recycling and membrane targeting. Interacts with NSG1 (By similarity). Interacts with TPC1 (By similarity). Interacts (via N-terminus) with VPS13B (By similarity).</text>
</comment>
<comment type="subcellular location">
    <subcellularLocation>
        <location evidence="1">Endosome membrane</location>
        <topology evidence="1">Single-pass type IV membrane protein</topology>
    </subcellularLocation>
    <subcellularLocation>
        <location evidence="1">Golgi apparatus membrane</location>
        <topology evidence="1">Single-pass type IV membrane protein</topology>
    </subcellularLocation>
    <subcellularLocation>
        <location evidence="1">Endomembrane system</location>
        <topology evidence="1">Single-pass type IV membrane protein</topology>
        <orientation evidence="1">Cytoplasmic side</orientation>
    </subcellularLocation>
    <subcellularLocation>
        <location evidence="1">Early endosome membrane</location>
        <topology evidence="1">Single-pass type IV membrane protein</topology>
    </subcellularLocation>
    <subcellularLocation>
        <location evidence="1">Recycling endosome membrane</location>
        <topology evidence="1">Single-pass type IV membrane protein</topology>
    </subcellularLocation>
</comment>
<comment type="similarity">
    <text evidence="6">Belongs to the syntaxin family.</text>
</comment>
<accession>Q5RBW6</accession>
<evidence type="ECO:0000250" key="1">
    <source>
        <dbReference type="UniProtKB" id="G3V7P1"/>
    </source>
</evidence>
<evidence type="ECO:0000250" key="2">
    <source>
        <dbReference type="UniProtKB" id="Q86Y82"/>
    </source>
</evidence>
<evidence type="ECO:0000250" key="3">
    <source>
        <dbReference type="UniProtKB" id="Q9ER00"/>
    </source>
</evidence>
<evidence type="ECO:0000255" key="4"/>
<evidence type="ECO:0000255" key="5">
    <source>
        <dbReference type="PROSITE-ProRule" id="PRU00202"/>
    </source>
</evidence>
<evidence type="ECO:0000305" key="6"/>
<reference key="1">
    <citation type="submission" date="2004-11" db="EMBL/GenBank/DDBJ databases">
        <authorList>
            <consortium name="The German cDNA consortium"/>
        </authorList>
    </citation>
    <scope>NUCLEOTIDE SEQUENCE [LARGE SCALE MRNA]</scope>
    <source>
        <tissue>Kidney</tissue>
    </source>
</reference>